<feature type="chain" id="PRO_1000184252" description="Protein translocase subunit SecA">
    <location>
        <begin position="1"/>
        <end position="903"/>
    </location>
</feature>
<feature type="region of interest" description="Disordered" evidence="2">
    <location>
        <begin position="840"/>
        <end position="903"/>
    </location>
</feature>
<feature type="compositionally biased region" description="Basic and acidic residues" evidence="2">
    <location>
        <begin position="840"/>
        <end position="853"/>
    </location>
</feature>
<feature type="binding site" evidence="1">
    <location>
        <position position="87"/>
    </location>
    <ligand>
        <name>ATP</name>
        <dbReference type="ChEBI" id="CHEBI:30616"/>
    </ligand>
</feature>
<feature type="binding site" evidence="1">
    <location>
        <begin position="105"/>
        <end position="109"/>
    </location>
    <ligand>
        <name>ATP</name>
        <dbReference type="ChEBI" id="CHEBI:30616"/>
    </ligand>
</feature>
<feature type="binding site" evidence="1">
    <location>
        <position position="513"/>
    </location>
    <ligand>
        <name>ATP</name>
        <dbReference type="ChEBI" id="CHEBI:30616"/>
    </ligand>
</feature>
<feature type="binding site" evidence="1">
    <location>
        <position position="887"/>
    </location>
    <ligand>
        <name>Zn(2+)</name>
        <dbReference type="ChEBI" id="CHEBI:29105"/>
    </ligand>
</feature>
<feature type="binding site" evidence="1">
    <location>
        <position position="889"/>
    </location>
    <ligand>
        <name>Zn(2+)</name>
        <dbReference type="ChEBI" id="CHEBI:29105"/>
    </ligand>
</feature>
<feature type="binding site" evidence="1">
    <location>
        <position position="898"/>
    </location>
    <ligand>
        <name>Zn(2+)</name>
        <dbReference type="ChEBI" id="CHEBI:29105"/>
    </ligand>
</feature>
<feature type="binding site" evidence="1">
    <location>
        <position position="899"/>
    </location>
    <ligand>
        <name>Zn(2+)</name>
        <dbReference type="ChEBI" id="CHEBI:29105"/>
    </ligand>
</feature>
<dbReference type="EC" id="7.4.2.8" evidence="1"/>
<dbReference type="EMBL" id="CP001233">
    <property type="protein sequence ID" value="ACP06617.1"/>
    <property type="molecule type" value="Genomic_DNA"/>
</dbReference>
<dbReference type="RefSeq" id="WP_000628943.1">
    <property type="nucleotide sequence ID" value="NC_012578.1"/>
</dbReference>
<dbReference type="SMR" id="C3LQT9"/>
<dbReference type="KEGG" id="vcm:VCM66_2317"/>
<dbReference type="HOGENOM" id="CLU_005314_3_0_6"/>
<dbReference type="Proteomes" id="UP000001217">
    <property type="component" value="Chromosome I"/>
</dbReference>
<dbReference type="GO" id="GO:0031522">
    <property type="term" value="C:cell envelope Sec protein transport complex"/>
    <property type="evidence" value="ECO:0007669"/>
    <property type="project" value="TreeGrafter"/>
</dbReference>
<dbReference type="GO" id="GO:0005829">
    <property type="term" value="C:cytosol"/>
    <property type="evidence" value="ECO:0007669"/>
    <property type="project" value="TreeGrafter"/>
</dbReference>
<dbReference type="GO" id="GO:0005886">
    <property type="term" value="C:plasma membrane"/>
    <property type="evidence" value="ECO:0007669"/>
    <property type="project" value="UniProtKB-SubCell"/>
</dbReference>
<dbReference type="GO" id="GO:0005524">
    <property type="term" value="F:ATP binding"/>
    <property type="evidence" value="ECO:0007669"/>
    <property type="project" value="UniProtKB-UniRule"/>
</dbReference>
<dbReference type="GO" id="GO:0046872">
    <property type="term" value="F:metal ion binding"/>
    <property type="evidence" value="ECO:0007669"/>
    <property type="project" value="UniProtKB-KW"/>
</dbReference>
<dbReference type="GO" id="GO:0008564">
    <property type="term" value="F:protein-exporting ATPase activity"/>
    <property type="evidence" value="ECO:0007669"/>
    <property type="project" value="UniProtKB-EC"/>
</dbReference>
<dbReference type="GO" id="GO:0065002">
    <property type="term" value="P:intracellular protein transmembrane transport"/>
    <property type="evidence" value="ECO:0007669"/>
    <property type="project" value="UniProtKB-UniRule"/>
</dbReference>
<dbReference type="GO" id="GO:0017038">
    <property type="term" value="P:protein import"/>
    <property type="evidence" value="ECO:0007669"/>
    <property type="project" value="InterPro"/>
</dbReference>
<dbReference type="GO" id="GO:0006605">
    <property type="term" value="P:protein targeting"/>
    <property type="evidence" value="ECO:0007669"/>
    <property type="project" value="UniProtKB-UniRule"/>
</dbReference>
<dbReference type="GO" id="GO:0043952">
    <property type="term" value="P:protein transport by the Sec complex"/>
    <property type="evidence" value="ECO:0007669"/>
    <property type="project" value="TreeGrafter"/>
</dbReference>
<dbReference type="CDD" id="cd17928">
    <property type="entry name" value="DEXDc_SecA"/>
    <property type="match status" value="1"/>
</dbReference>
<dbReference type="CDD" id="cd18803">
    <property type="entry name" value="SF2_C_secA"/>
    <property type="match status" value="1"/>
</dbReference>
<dbReference type="FunFam" id="1.10.3060.10:FF:000001">
    <property type="entry name" value="Preprotein translocase subunit SecA"/>
    <property type="match status" value="1"/>
</dbReference>
<dbReference type="FunFam" id="3.40.50.300:FF:000081">
    <property type="entry name" value="Preprotein translocase subunit SecA"/>
    <property type="match status" value="1"/>
</dbReference>
<dbReference type="FunFam" id="3.40.50.300:FF:000113">
    <property type="entry name" value="Preprotein translocase subunit SecA"/>
    <property type="match status" value="1"/>
</dbReference>
<dbReference type="FunFam" id="3.90.1440.10:FF:000001">
    <property type="entry name" value="Preprotein translocase subunit SecA"/>
    <property type="match status" value="1"/>
</dbReference>
<dbReference type="Gene3D" id="1.10.3060.10">
    <property type="entry name" value="Helical scaffold and wing domains of SecA"/>
    <property type="match status" value="1"/>
</dbReference>
<dbReference type="Gene3D" id="3.40.50.300">
    <property type="entry name" value="P-loop containing nucleotide triphosphate hydrolases"/>
    <property type="match status" value="2"/>
</dbReference>
<dbReference type="Gene3D" id="3.90.1440.10">
    <property type="entry name" value="SecA, preprotein cross-linking domain"/>
    <property type="match status" value="1"/>
</dbReference>
<dbReference type="HAMAP" id="MF_01382">
    <property type="entry name" value="SecA"/>
    <property type="match status" value="1"/>
</dbReference>
<dbReference type="InterPro" id="IPR014001">
    <property type="entry name" value="Helicase_ATP-bd"/>
</dbReference>
<dbReference type="InterPro" id="IPR001650">
    <property type="entry name" value="Helicase_C-like"/>
</dbReference>
<dbReference type="InterPro" id="IPR027417">
    <property type="entry name" value="P-loop_NTPase"/>
</dbReference>
<dbReference type="InterPro" id="IPR004027">
    <property type="entry name" value="SEC_C_motif"/>
</dbReference>
<dbReference type="InterPro" id="IPR000185">
    <property type="entry name" value="SecA"/>
</dbReference>
<dbReference type="InterPro" id="IPR020937">
    <property type="entry name" value="SecA_CS"/>
</dbReference>
<dbReference type="InterPro" id="IPR011115">
    <property type="entry name" value="SecA_DEAD"/>
</dbReference>
<dbReference type="InterPro" id="IPR014018">
    <property type="entry name" value="SecA_motor_DEAD"/>
</dbReference>
<dbReference type="InterPro" id="IPR011130">
    <property type="entry name" value="SecA_preprotein_X-link_dom"/>
</dbReference>
<dbReference type="InterPro" id="IPR044722">
    <property type="entry name" value="SecA_SF2_C"/>
</dbReference>
<dbReference type="InterPro" id="IPR011116">
    <property type="entry name" value="SecA_Wing/Scaffold"/>
</dbReference>
<dbReference type="InterPro" id="IPR036266">
    <property type="entry name" value="SecA_Wing/Scaffold_sf"/>
</dbReference>
<dbReference type="InterPro" id="IPR036670">
    <property type="entry name" value="SecA_X-link_sf"/>
</dbReference>
<dbReference type="NCBIfam" id="NF009538">
    <property type="entry name" value="PRK12904.1"/>
    <property type="match status" value="1"/>
</dbReference>
<dbReference type="NCBIfam" id="TIGR00963">
    <property type="entry name" value="secA"/>
    <property type="match status" value="1"/>
</dbReference>
<dbReference type="PANTHER" id="PTHR30612:SF0">
    <property type="entry name" value="CHLOROPLAST PROTEIN-TRANSPORTING ATPASE"/>
    <property type="match status" value="1"/>
</dbReference>
<dbReference type="PANTHER" id="PTHR30612">
    <property type="entry name" value="SECA INNER MEMBRANE COMPONENT OF SEC PROTEIN SECRETION SYSTEM"/>
    <property type="match status" value="1"/>
</dbReference>
<dbReference type="Pfam" id="PF21090">
    <property type="entry name" value="P-loop_SecA"/>
    <property type="match status" value="1"/>
</dbReference>
<dbReference type="Pfam" id="PF02810">
    <property type="entry name" value="SEC-C"/>
    <property type="match status" value="1"/>
</dbReference>
<dbReference type="Pfam" id="PF07517">
    <property type="entry name" value="SecA_DEAD"/>
    <property type="match status" value="1"/>
</dbReference>
<dbReference type="Pfam" id="PF01043">
    <property type="entry name" value="SecA_PP_bind"/>
    <property type="match status" value="1"/>
</dbReference>
<dbReference type="Pfam" id="PF07516">
    <property type="entry name" value="SecA_SW"/>
    <property type="match status" value="1"/>
</dbReference>
<dbReference type="PRINTS" id="PR00906">
    <property type="entry name" value="SECA"/>
</dbReference>
<dbReference type="SMART" id="SM00957">
    <property type="entry name" value="SecA_DEAD"/>
    <property type="match status" value="1"/>
</dbReference>
<dbReference type="SMART" id="SM00958">
    <property type="entry name" value="SecA_PP_bind"/>
    <property type="match status" value="1"/>
</dbReference>
<dbReference type="SUPFAM" id="SSF81886">
    <property type="entry name" value="Helical scaffold and wing domains of SecA"/>
    <property type="match status" value="1"/>
</dbReference>
<dbReference type="SUPFAM" id="SSF52540">
    <property type="entry name" value="P-loop containing nucleoside triphosphate hydrolases"/>
    <property type="match status" value="2"/>
</dbReference>
<dbReference type="SUPFAM" id="SSF81767">
    <property type="entry name" value="Pre-protein crosslinking domain of SecA"/>
    <property type="match status" value="1"/>
</dbReference>
<dbReference type="PROSITE" id="PS01312">
    <property type="entry name" value="SECA"/>
    <property type="match status" value="1"/>
</dbReference>
<dbReference type="PROSITE" id="PS51196">
    <property type="entry name" value="SECA_MOTOR_DEAD"/>
    <property type="match status" value="1"/>
</dbReference>
<proteinExistence type="inferred from homology"/>
<sequence>MITKLLTKVIGSRNDRTLRRLRKIVKEINNYEPAFEALSDEELKAKTVEFRQRIEQGENLDQLLPEAFATVREASKRVFGMRHFDVQLIGGMVLHGGQIAEMRTGEGKTLTATLAAYLNALPGKGVHIVTVNDYLAKRDAETNRPLFEFLGMTVGVNIPNMPQPAKKEAYQADILYGTNNEFGFDYLRDNMAFRPEDRVQRARFFAVVDEVDSILIDEARTPLIISGPAEDSSDLYIRINKLIPLLQKQDKEDSEEYRGDGHFTVDEKSKQVHLTETGQEFVEELLVKNGMMQEGDTLYSPANISLLHHVNAALRAHVLFEKNVDYIVTPDGEVVIVDEHTGRTMPGRRWSDGLHQAVEAKEGVKIQNENQTLASITFQNYFRLYEKLSGMTGTADTEAFEFQQIYGLETVVIPTNKPMVRNDMPDVVYRSEAEKFAAIIEDIKQRVEKGQPVLVGTVSIEKSELLSNALKKAGIKHNVLNAKFHEKEAEIVAEAGKPGAVTIATNMAGRGTDIVLGGSWQAKVEKLDNPTQEQIDAIKAEWKQVHDQVLQAGGLHIIGTERHESRRIDNQLRGRSGRQGDAGSSRFYLSMEDTLLRIFTSDRMAALIQSGMDEGEAIESKMLSRSIEKAQRKVEGRNFDIRKQLLEYDDVANDQRKVVYELRDELMSADDISDMIAQNREDVLNAVMDEYIPPQSLEDMWDIKGLEDRLKNDFDLPLPIQSWLDADNKLYEEALRERIIEQAVEVYKAKEQAVSPAVMRNFEKSVMLQTLDTLWKEHLAAMDHLRQGIHLRGYAQKNPKQEYKRESFELFEDLLESLKSDVITVLSKVRVQQQEEVERMEAQRRAQAEEAARHAQAQHASADDAEQDESNQPMVRDERKVGRNEPCPCGSGKKYKQCHGQIN</sequence>
<keyword id="KW-0067">ATP-binding</keyword>
<keyword id="KW-0997">Cell inner membrane</keyword>
<keyword id="KW-1003">Cell membrane</keyword>
<keyword id="KW-0963">Cytoplasm</keyword>
<keyword id="KW-0472">Membrane</keyword>
<keyword id="KW-0479">Metal-binding</keyword>
<keyword id="KW-0547">Nucleotide-binding</keyword>
<keyword id="KW-0653">Protein transport</keyword>
<keyword id="KW-1278">Translocase</keyword>
<keyword id="KW-0811">Translocation</keyword>
<keyword id="KW-0813">Transport</keyword>
<keyword id="KW-0862">Zinc</keyword>
<gene>
    <name evidence="1" type="primary">secA</name>
    <name type="ordered locus">VCM66_2317</name>
</gene>
<organism>
    <name type="scientific">Vibrio cholerae serotype O1 (strain M66-2)</name>
    <dbReference type="NCBI Taxonomy" id="579112"/>
    <lineage>
        <taxon>Bacteria</taxon>
        <taxon>Pseudomonadati</taxon>
        <taxon>Pseudomonadota</taxon>
        <taxon>Gammaproteobacteria</taxon>
        <taxon>Vibrionales</taxon>
        <taxon>Vibrionaceae</taxon>
        <taxon>Vibrio</taxon>
    </lineage>
</organism>
<comment type="function">
    <text evidence="1">Part of the Sec protein translocase complex. Interacts with the SecYEG preprotein conducting channel. Has a central role in coupling the hydrolysis of ATP to the transfer of proteins into and across the cell membrane, serving both as a receptor for the preprotein-SecB complex and as an ATP-driven molecular motor driving the stepwise translocation of polypeptide chains across the membrane.</text>
</comment>
<comment type="catalytic activity">
    <reaction evidence="1">
        <text>ATP + H2O + cellular proteinSide 1 = ADP + phosphate + cellular proteinSide 2.</text>
        <dbReference type="EC" id="7.4.2.8"/>
    </reaction>
</comment>
<comment type="cofactor">
    <cofactor evidence="1">
        <name>Zn(2+)</name>
        <dbReference type="ChEBI" id="CHEBI:29105"/>
    </cofactor>
    <text evidence="1">May bind 1 zinc ion per subunit.</text>
</comment>
<comment type="subunit">
    <text evidence="1">Monomer and homodimer. Part of the essential Sec protein translocation apparatus which comprises SecA, SecYEG and auxiliary proteins SecDF-YajC and YidC.</text>
</comment>
<comment type="subcellular location">
    <subcellularLocation>
        <location evidence="1">Cell inner membrane</location>
        <topology evidence="1">Peripheral membrane protein</topology>
        <orientation evidence="1">Cytoplasmic side</orientation>
    </subcellularLocation>
    <subcellularLocation>
        <location evidence="1">Cytoplasm</location>
    </subcellularLocation>
    <text evidence="1">Distribution is 50-50.</text>
</comment>
<comment type="similarity">
    <text evidence="1">Belongs to the SecA family.</text>
</comment>
<name>SECA_VIBCM</name>
<accession>C3LQT9</accession>
<protein>
    <recommendedName>
        <fullName evidence="1">Protein translocase subunit SecA</fullName>
        <ecNumber evidence="1">7.4.2.8</ecNumber>
    </recommendedName>
</protein>
<reference key="1">
    <citation type="journal article" date="2008" name="PLoS ONE">
        <title>A recalibrated molecular clock and independent origins for the cholera pandemic clones.</title>
        <authorList>
            <person name="Feng L."/>
            <person name="Reeves P.R."/>
            <person name="Lan R."/>
            <person name="Ren Y."/>
            <person name="Gao C."/>
            <person name="Zhou Z."/>
            <person name="Ren Y."/>
            <person name="Cheng J."/>
            <person name="Wang W."/>
            <person name="Wang J."/>
            <person name="Qian W."/>
            <person name="Li D."/>
            <person name="Wang L."/>
        </authorList>
    </citation>
    <scope>NUCLEOTIDE SEQUENCE [LARGE SCALE GENOMIC DNA]</scope>
    <source>
        <strain>M66-2</strain>
    </source>
</reference>
<evidence type="ECO:0000255" key="1">
    <source>
        <dbReference type="HAMAP-Rule" id="MF_01382"/>
    </source>
</evidence>
<evidence type="ECO:0000256" key="2">
    <source>
        <dbReference type="SAM" id="MobiDB-lite"/>
    </source>
</evidence>